<accession>Q89A57</accession>
<evidence type="ECO:0000255" key="1">
    <source>
        <dbReference type="HAMAP-Rule" id="MF_00740"/>
    </source>
</evidence>
<proteinExistence type="inferred from homology"/>
<reference key="1">
    <citation type="journal article" date="2003" name="Proc. Natl. Acad. Sci. U.S.A.">
        <title>Reductive genome evolution in Buchnera aphidicola.</title>
        <authorList>
            <person name="van Ham R.C.H.J."/>
            <person name="Kamerbeek J."/>
            <person name="Palacios C."/>
            <person name="Rausell C."/>
            <person name="Abascal F."/>
            <person name="Bastolla U."/>
            <person name="Fernandez J.M."/>
            <person name="Jimenez L."/>
            <person name="Postigo M."/>
            <person name="Silva F.J."/>
            <person name="Tamames J."/>
            <person name="Viguera E."/>
            <person name="Latorre A."/>
            <person name="Valencia A."/>
            <person name="Moran F."/>
            <person name="Moya A."/>
        </authorList>
    </citation>
    <scope>NUCLEOTIDE SEQUENCE [LARGE SCALE GENOMIC DNA]</scope>
    <source>
        <strain>Bp</strain>
    </source>
</reference>
<name>DEOB_BUCBP</name>
<gene>
    <name evidence="1" type="primary">deoB</name>
    <name type="ordered locus">bbp_484</name>
</gene>
<sequence>MKRAFLIVLDSFGIGATKDAHRFGDVGANTFGNIAKFCFLNKANNYGRKGLLYIPHLLSLGLAKVAIASSGQDLLGIQDTNNVIGSYAYSNEISSGKDTSSGHWEIAGAPVLFDWDYFSSSLNSVPKYLIQDIVDQCNLSGFLGNCHASGTDILDRFGEIHISTKKPILYTSIDSVCQIACHESIFGLKRLYNLCRSIRKIFDKRKINIARIIARPFTGFKKEHFRRTGNRRDFSMEPHKITVMEKLIGEKKGRVIAIGKISDIYAGKGISCSMYATGLVNLFNTTIQEIKNAKNNTIVFVNFVDFDSLWGHRRDVSGYAKDLEWFDYNLPKLLKLVHNEDLLIITADHGCDPTWIGTDHTRENVPILIYQRSMESKNFGYRETFSDIGQTLAKYFNLSTMSYGTSIF</sequence>
<feature type="chain" id="PRO_0000199813" description="Phosphopentomutase">
    <location>
        <begin position="1"/>
        <end position="408"/>
    </location>
</feature>
<feature type="binding site" evidence="1">
    <location>
        <position position="10"/>
    </location>
    <ligand>
        <name>Mn(2+)</name>
        <dbReference type="ChEBI" id="CHEBI:29035"/>
        <label>1</label>
    </ligand>
</feature>
<feature type="binding site" evidence="1">
    <location>
        <position position="307"/>
    </location>
    <ligand>
        <name>Mn(2+)</name>
        <dbReference type="ChEBI" id="CHEBI:29035"/>
        <label>2</label>
    </ligand>
</feature>
<feature type="binding site" evidence="1">
    <location>
        <position position="312"/>
    </location>
    <ligand>
        <name>Mn(2+)</name>
        <dbReference type="ChEBI" id="CHEBI:29035"/>
        <label>2</label>
    </ligand>
</feature>
<feature type="binding site" evidence="1">
    <location>
        <position position="348"/>
    </location>
    <ligand>
        <name>Mn(2+)</name>
        <dbReference type="ChEBI" id="CHEBI:29035"/>
        <label>1</label>
    </ligand>
</feature>
<feature type="binding site" evidence="1">
    <location>
        <position position="349"/>
    </location>
    <ligand>
        <name>Mn(2+)</name>
        <dbReference type="ChEBI" id="CHEBI:29035"/>
        <label>1</label>
    </ligand>
</feature>
<feature type="binding site" evidence="1">
    <location>
        <position position="360"/>
    </location>
    <ligand>
        <name>Mn(2+)</name>
        <dbReference type="ChEBI" id="CHEBI:29035"/>
        <label>2</label>
    </ligand>
</feature>
<dbReference type="EC" id="5.4.2.7" evidence="1"/>
<dbReference type="EMBL" id="AE016826">
    <property type="protein sequence ID" value="AAO27189.1"/>
    <property type="molecule type" value="Genomic_DNA"/>
</dbReference>
<dbReference type="RefSeq" id="WP_011091590.1">
    <property type="nucleotide sequence ID" value="NC_004545.1"/>
</dbReference>
<dbReference type="SMR" id="Q89A57"/>
<dbReference type="STRING" id="224915.bbp_484"/>
<dbReference type="KEGG" id="bab:bbp_484"/>
<dbReference type="eggNOG" id="COG1015">
    <property type="taxonomic scope" value="Bacteria"/>
</dbReference>
<dbReference type="HOGENOM" id="CLU_053861_0_0_6"/>
<dbReference type="OrthoDB" id="9769930at2"/>
<dbReference type="UniPathway" id="UPA00002">
    <property type="reaction ID" value="UER00467"/>
</dbReference>
<dbReference type="Proteomes" id="UP000000601">
    <property type="component" value="Chromosome"/>
</dbReference>
<dbReference type="GO" id="GO:0005829">
    <property type="term" value="C:cytosol"/>
    <property type="evidence" value="ECO:0007669"/>
    <property type="project" value="TreeGrafter"/>
</dbReference>
<dbReference type="GO" id="GO:0000287">
    <property type="term" value="F:magnesium ion binding"/>
    <property type="evidence" value="ECO:0007669"/>
    <property type="project" value="InterPro"/>
</dbReference>
<dbReference type="GO" id="GO:0030145">
    <property type="term" value="F:manganese ion binding"/>
    <property type="evidence" value="ECO:0007669"/>
    <property type="project" value="UniProtKB-UniRule"/>
</dbReference>
<dbReference type="GO" id="GO:0008973">
    <property type="term" value="F:phosphopentomutase activity"/>
    <property type="evidence" value="ECO:0007669"/>
    <property type="project" value="UniProtKB-UniRule"/>
</dbReference>
<dbReference type="GO" id="GO:0006018">
    <property type="term" value="P:2-deoxyribose 1-phosphate catabolic process"/>
    <property type="evidence" value="ECO:0007669"/>
    <property type="project" value="UniProtKB-UniRule"/>
</dbReference>
<dbReference type="GO" id="GO:0006015">
    <property type="term" value="P:5-phosphoribose 1-diphosphate biosynthetic process"/>
    <property type="evidence" value="ECO:0007669"/>
    <property type="project" value="UniProtKB-UniPathway"/>
</dbReference>
<dbReference type="GO" id="GO:0043094">
    <property type="term" value="P:metabolic compound salvage"/>
    <property type="evidence" value="ECO:0007669"/>
    <property type="project" value="InterPro"/>
</dbReference>
<dbReference type="GO" id="GO:0009117">
    <property type="term" value="P:nucleotide metabolic process"/>
    <property type="evidence" value="ECO:0007669"/>
    <property type="project" value="InterPro"/>
</dbReference>
<dbReference type="CDD" id="cd16009">
    <property type="entry name" value="PPM"/>
    <property type="match status" value="1"/>
</dbReference>
<dbReference type="Gene3D" id="3.40.720.10">
    <property type="entry name" value="Alkaline Phosphatase, subunit A"/>
    <property type="match status" value="1"/>
</dbReference>
<dbReference type="Gene3D" id="3.30.70.1250">
    <property type="entry name" value="Phosphopentomutase"/>
    <property type="match status" value="1"/>
</dbReference>
<dbReference type="HAMAP" id="MF_00740">
    <property type="entry name" value="Phosphopentomut"/>
    <property type="match status" value="1"/>
</dbReference>
<dbReference type="InterPro" id="IPR017850">
    <property type="entry name" value="Alkaline_phosphatase_core_sf"/>
</dbReference>
<dbReference type="InterPro" id="IPR010045">
    <property type="entry name" value="DeoB"/>
</dbReference>
<dbReference type="InterPro" id="IPR006124">
    <property type="entry name" value="Metalloenzyme"/>
</dbReference>
<dbReference type="InterPro" id="IPR024052">
    <property type="entry name" value="Phosphopentomutase_DeoB_cap_sf"/>
</dbReference>
<dbReference type="NCBIfam" id="TIGR01696">
    <property type="entry name" value="deoB"/>
    <property type="match status" value="1"/>
</dbReference>
<dbReference type="NCBIfam" id="NF003766">
    <property type="entry name" value="PRK05362.1"/>
    <property type="match status" value="1"/>
</dbReference>
<dbReference type="PANTHER" id="PTHR21110">
    <property type="entry name" value="PHOSPHOPENTOMUTASE"/>
    <property type="match status" value="1"/>
</dbReference>
<dbReference type="PANTHER" id="PTHR21110:SF0">
    <property type="entry name" value="PHOSPHOPENTOMUTASE"/>
    <property type="match status" value="1"/>
</dbReference>
<dbReference type="Pfam" id="PF01676">
    <property type="entry name" value="Metalloenzyme"/>
    <property type="match status" value="1"/>
</dbReference>
<dbReference type="PIRSF" id="PIRSF001491">
    <property type="entry name" value="Ppentomutase"/>
    <property type="match status" value="1"/>
</dbReference>
<dbReference type="SUPFAM" id="SSF53649">
    <property type="entry name" value="Alkaline phosphatase-like"/>
    <property type="match status" value="1"/>
</dbReference>
<dbReference type="SUPFAM" id="SSF143856">
    <property type="entry name" value="DeoB insert domain-like"/>
    <property type="match status" value="1"/>
</dbReference>
<protein>
    <recommendedName>
        <fullName evidence="1">Phosphopentomutase</fullName>
        <ecNumber evidence="1">5.4.2.7</ecNumber>
    </recommendedName>
    <alternativeName>
        <fullName evidence="1">Phosphodeoxyribomutase</fullName>
    </alternativeName>
</protein>
<organism>
    <name type="scientific">Buchnera aphidicola subsp. Baizongia pistaciae (strain Bp)</name>
    <dbReference type="NCBI Taxonomy" id="224915"/>
    <lineage>
        <taxon>Bacteria</taxon>
        <taxon>Pseudomonadati</taxon>
        <taxon>Pseudomonadota</taxon>
        <taxon>Gammaproteobacteria</taxon>
        <taxon>Enterobacterales</taxon>
        <taxon>Erwiniaceae</taxon>
        <taxon>Buchnera</taxon>
    </lineage>
</organism>
<comment type="function">
    <text evidence="1">Isomerase that catalyzes the conversion of deoxy-ribose 1-phosphate (dRib-1-P) and ribose 1-phosphate (Rib-1-P) to deoxy-ribose 5-phosphate (dRib-5-P) and ribose 5-phosphate (Rib-5-P), respectively.</text>
</comment>
<comment type="catalytic activity">
    <reaction evidence="1">
        <text>2-deoxy-alpha-D-ribose 1-phosphate = 2-deoxy-D-ribose 5-phosphate</text>
        <dbReference type="Rhea" id="RHEA:27658"/>
        <dbReference type="ChEBI" id="CHEBI:57259"/>
        <dbReference type="ChEBI" id="CHEBI:62877"/>
        <dbReference type="EC" id="5.4.2.7"/>
    </reaction>
</comment>
<comment type="catalytic activity">
    <reaction evidence="1">
        <text>alpha-D-ribose 1-phosphate = D-ribose 5-phosphate</text>
        <dbReference type="Rhea" id="RHEA:18793"/>
        <dbReference type="ChEBI" id="CHEBI:57720"/>
        <dbReference type="ChEBI" id="CHEBI:78346"/>
        <dbReference type="EC" id="5.4.2.7"/>
    </reaction>
</comment>
<comment type="cofactor">
    <cofactor evidence="1">
        <name>Mn(2+)</name>
        <dbReference type="ChEBI" id="CHEBI:29035"/>
    </cofactor>
    <text evidence="1">Binds 2 manganese ions.</text>
</comment>
<comment type="pathway">
    <text evidence="1">Carbohydrate degradation; 2-deoxy-D-ribose 1-phosphate degradation; D-glyceraldehyde 3-phosphate and acetaldehyde from 2-deoxy-alpha-D-ribose 1-phosphate: step 1/2.</text>
</comment>
<comment type="subcellular location">
    <subcellularLocation>
        <location evidence="1">Cytoplasm</location>
    </subcellularLocation>
</comment>
<comment type="similarity">
    <text evidence="1">Belongs to the phosphopentomutase family.</text>
</comment>
<keyword id="KW-0963">Cytoplasm</keyword>
<keyword id="KW-0413">Isomerase</keyword>
<keyword id="KW-0464">Manganese</keyword>
<keyword id="KW-0479">Metal-binding</keyword>
<keyword id="KW-1185">Reference proteome</keyword>